<evidence type="ECO:0000255" key="1">
    <source>
        <dbReference type="HAMAP-Rule" id="MF_00736"/>
    </source>
</evidence>
<evidence type="ECO:0000305" key="2"/>
<proteinExistence type="inferred from homology"/>
<protein>
    <recommendedName>
        <fullName evidence="1">Large ribosomal subunit protein uL11</fullName>
    </recommendedName>
    <alternativeName>
        <fullName evidence="2">50S ribosomal protein L11</fullName>
    </alternativeName>
</protein>
<gene>
    <name evidence="1" type="primary">rplK</name>
    <name type="ordered locus">VV3163</name>
</gene>
<keyword id="KW-0488">Methylation</keyword>
<keyword id="KW-0687">Ribonucleoprotein</keyword>
<keyword id="KW-0689">Ribosomal protein</keyword>
<keyword id="KW-0694">RNA-binding</keyword>
<keyword id="KW-0699">rRNA-binding</keyword>
<sequence length="142" mass="14781">MAKKVEAYIKLQVAAGMANPSPPVGPALGQRGVNIMEFCKAFNAKTESMEKGLPVPVVITVYSDRSFTFVTKTPPAAVLLKKAAGIKSGSGRPNTEKVGTVTDAQIQEIAEAKAADMTGADIEAMKRSIAGTARSMGLVVEG</sequence>
<dbReference type="EMBL" id="BA000037">
    <property type="protein sequence ID" value="BAC95927.1"/>
    <property type="molecule type" value="Genomic_DNA"/>
</dbReference>
<dbReference type="RefSeq" id="WP_011151383.1">
    <property type="nucleotide sequence ID" value="NC_005139.1"/>
</dbReference>
<dbReference type="SMR" id="P60105"/>
<dbReference type="STRING" id="672.VV93_v1c28800"/>
<dbReference type="KEGG" id="vvy:VV3163"/>
<dbReference type="PATRIC" id="fig|196600.6.peg.3132"/>
<dbReference type="eggNOG" id="COG0080">
    <property type="taxonomic scope" value="Bacteria"/>
</dbReference>
<dbReference type="HOGENOM" id="CLU_074237_2_0_6"/>
<dbReference type="Proteomes" id="UP000002675">
    <property type="component" value="Chromosome I"/>
</dbReference>
<dbReference type="GO" id="GO:0022625">
    <property type="term" value="C:cytosolic large ribosomal subunit"/>
    <property type="evidence" value="ECO:0007669"/>
    <property type="project" value="TreeGrafter"/>
</dbReference>
<dbReference type="GO" id="GO:0070180">
    <property type="term" value="F:large ribosomal subunit rRNA binding"/>
    <property type="evidence" value="ECO:0007669"/>
    <property type="project" value="UniProtKB-UniRule"/>
</dbReference>
<dbReference type="GO" id="GO:0003735">
    <property type="term" value="F:structural constituent of ribosome"/>
    <property type="evidence" value="ECO:0007669"/>
    <property type="project" value="InterPro"/>
</dbReference>
<dbReference type="GO" id="GO:0006412">
    <property type="term" value="P:translation"/>
    <property type="evidence" value="ECO:0007669"/>
    <property type="project" value="UniProtKB-UniRule"/>
</dbReference>
<dbReference type="CDD" id="cd00349">
    <property type="entry name" value="Ribosomal_L11"/>
    <property type="match status" value="1"/>
</dbReference>
<dbReference type="FunFam" id="1.10.10.250:FF:000001">
    <property type="entry name" value="50S ribosomal protein L11"/>
    <property type="match status" value="1"/>
</dbReference>
<dbReference type="FunFam" id="3.30.1550.10:FF:000001">
    <property type="entry name" value="50S ribosomal protein L11"/>
    <property type="match status" value="1"/>
</dbReference>
<dbReference type="Gene3D" id="1.10.10.250">
    <property type="entry name" value="Ribosomal protein L11, C-terminal domain"/>
    <property type="match status" value="1"/>
</dbReference>
<dbReference type="Gene3D" id="3.30.1550.10">
    <property type="entry name" value="Ribosomal protein L11/L12, N-terminal domain"/>
    <property type="match status" value="1"/>
</dbReference>
<dbReference type="HAMAP" id="MF_00736">
    <property type="entry name" value="Ribosomal_uL11"/>
    <property type="match status" value="1"/>
</dbReference>
<dbReference type="InterPro" id="IPR000911">
    <property type="entry name" value="Ribosomal_uL11"/>
</dbReference>
<dbReference type="InterPro" id="IPR006519">
    <property type="entry name" value="Ribosomal_uL11_bac-typ"/>
</dbReference>
<dbReference type="InterPro" id="IPR020783">
    <property type="entry name" value="Ribosomal_uL11_C"/>
</dbReference>
<dbReference type="InterPro" id="IPR036769">
    <property type="entry name" value="Ribosomal_uL11_C_sf"/>
</dbReference>
<dbReference type="InterPro" id="IPR020785">
    <property type="entry name" value="Ribosomal_uL11_CS"/>
</dbReference>
<dbReference type="InterPro" id="IPR020784">
    <property type="entry name" value="Ribosomal_uL11_N"/>
</dbReference>
<dbReference type="InterPro" id="IPR036796">
    <property type="entry name" value="Ribosomal_uL11_N_sf"/>
</dbReference>
<dbReference type="NCBIfam" id="TIGR01632">
    <property type="entry name" value="L11_bact"/>
    <property type="match status" value="1"/>
</dbReference>
<dbReference type="PANTHER" id="PTHR11661">
    <property type="entry name" value="60S RIBOSOMAL PROTEIN L12"/>
    <property type="match status" value="1"/>
</dbReference>
<dbReference type="PANTHER" id="PTHR11661:SF1">
    <property type="entry name" value="LARGE RIBOSOMAL SUBUNIT PROTEIN UL11M"/>
    <property type="match status" value="1"/>
</dbReference>
<dbReference type="Pfam" id="PF00298">
    <property type="entry name" value="Ribosomal_L11"/>
    <property type="match status" value="1"/>
</dbReference>
<dbReference type="Pfam" id="PF03946">
    <property type="entry name" value="Ribosomal_L11_N"/>
    <property type="match status" value="1"/>
</dbReference>
<dbReference type="SMART" id="SM00649">
    <property type="entry name" value="RL11"/>
    <property type="match status" value="1"/>
</dbReference>
<dbReference type="SUPFAM" id="SSF54747">
    <property type="entry name" value="Ribosomal L11/L12e N-terminal domain"/>
    <property type="match status" value="1"/>
</dbReference>
<dbReference type="SUPFAM" id="SSF46906">
    <property type="entry name" value="Ribosomal protein L11, C-terminal domain"/>
    <property type="match status" value="1"/>
</dbReference>
<dbReference type="PROSITE" id="PS00359">
    <property type="entry name" value="RIBOSOMAL_L11"/>
    <property type="match status" value="1"/>
</dbReference>
<comment type="function">
    <text evidence="1">Forms part of the ribosomal stalk which helps the ribosome interact with GTP-bound translation factors.</text>
</comment>
<comment type="subunit">
    <text evidence="1">Part of the ribosomal stalk of the 50S ribosomal subunit. Interacts with L10 and the large rRNA to form the base of the stalk. L10 forms an elongated spine to which L12 dimers bind in a sequential fashion forming a multimeric L10(L12)X complex.</text>
</comment>
<comment type="PTM">
    <text evidence="1">One or more lysine residues are methylated.</text>
</comment>
<comment type="similarity">
    <text evidence="1">Belongs to the universal ribosomal protein uL11 family.</text>
</comment>
<reference key="1">
    <citation type="journal article" date="2003" name="Genome Res.">
        <title>Comparative genome analysis of Vibrio vulnificus, a marine pathogen.</title>
        <authorList>
            <person name="Chen C.-Y."/>
            <person name="Wu K.-M."/>
            <person name="Chang Y.-C."/>
            <person name="Chang C.-H."/>
            <person name="Tsai H.-C."/>
            <person name="Liao T.-L."/>
            <person name="Liu Y.-M."/>
            <person name="Chen H.-J."/>
            <person name="Shen A.B.-T."/>
            <person name="Li J.-C."/>
            <person name="Su T.-L."/>
            <person name="Shao C.-P."/>
            <person name="Lee C.-T."/>
            <person name="Hor L.-I."/>
            <person name="Tsai S.-F."/>
        </authorList>
    </citation>
    <scope>NUCLEOTIDE SEQUENCE [LARGE SCALE GENOMIC DNA]</scope>
    <source>
        <strain>YJ016</strain>
    </source>
</reference>
<accession>P60105</accession>
<accession>Q7MGR4</accession>
<name>RL11_VIBVY</name>
<organism>
    <name type="scientific">Vibrio vulnificus (strain YJ016)</name>
    <dbReference type="NCBI Taxonomy" id="196600"/>
    <lineage>
        <taxon>Bacteria</taxon>
        <taxon>Pseudomonadati</taxon>
        <taxon>Pseudomonadota</taxon>
        <taxon>Gammaproteobacteria</taxon>
        <taxon>Vibrionales</taxon>
        <taxon>Vibrionaceae</taxon>
        <taxon>Vibrio</taxon>
    </lineage>
</organism>
<feature type="chain" id="PRO_0000104410" description="Large ribosomal subunit protein uL11">
    <location>
        <begin position="1"/>
        <end position="142"/>
    </location>
</feature>